<protein>
    <recommendedName>
        <fullName evidence="1">V-type ATP synthase subunit D</fullName>
    </recommendedName>
    <alternativeName>
        <fullName evidence="1">V-ATPase subunit D</fullName>
    </alternativeName>
</protein>
<sequence length="216" mass="25031">MKLNVNPTRMELTKLKKRLTTATRGHKLLKDKQDELMRRFIGMIKKNNELRKDVEKELEGSFKDFLMASAVMSPEFLEEAVAYPKESISVDVKKQNIMSVNVPVFDFKRKLEGDKGSIFPYGFANTSAELDGAIEKLYGILPKLLELAKVEKACQLMADEIEKTRRRVNALEYMTIPQLEETIRFIQMKLDENERSTVTRLMKIKSMMEEKQSNMV</sequence>
<feature type="chain" id="PRO_1000114478" description="V-type ATP synthase subunit D">
    <location>
        <begin position="1"/>
        <end position="216"/>
    </location>
</feature>
<accession>B1IJM6</accession>
<proteinExistence type="inferred from homology"/>
<name>VATD_CLOBK</name>
<comment type="function">
    <text evidence="1">Produces ATP from ADP in the presence of a proton gradient across the membrane.</text>
</comment>
<comment type="similarity">
    <text evidence="1">Belongs to the V-ATPase D subunit family.</text>
</comment>
<dbReference type="EMBL" id="CP000939">
    <property type="protein sequence ID" value="ACA44585.1"/>
    <property type="molecule type" value="Genomic_DNA"/>
</dbReference>
<dbReference type="RefSeq" id="WP_003401356.1">
    <property type="nucleotide sequence ID" value="NC_010516.1"/>
</dbReference>
<dbReference type="SMR" id="B1IJM6"/>
<dbReference type="KEGG" id="cbb:CLD_1942"/>
<dbReference type="HOGENOM" id="CLU_069688_2_1_9"/>
<dbReference type="Proteomes" id="UP000008541">
    <property type="component" value="Chromosome"/>
</dbReference>
<dbReference type="GO" id="GO:0005524">
    <property type="term" value="F:ATP binding"/>
    <property type="evidence" value="ECO:0007669"/>
    <property type="project" value="UniProtKB-UniRule"/>
</dbReference>
<dbReference type="GO" id="GO:0046933">
    <property type="term" value="F:proton-transporting ATP synthase activity, rotational mechanism"/>
    <property type="evidence" value="ECO:0007669"/>
    <property type="project" value="UniProtKB-UniRule"/>
</dbReference>
<dbReference type="GO" id="GO:0046961">
    <property type="term" value="F:proton-transporting ATPase activity, rotational mechanism"/>
    <property type="evidence" value="ECO:0007669"/>
    <property type="project" value="InterPro"/>
</dbReference>
<dbReference type="GO" id="GO:0042777">
    <property type="term" value="P:proton motive force-driven plasma membrane ATP synthesis"/>
    <property type="evidence" value="ECO:0007669"/>
    <property type="project" value="UniProtKB-UniRule"/>
</dbReference>
<dbReference type="FunFam" id="1.10.287.3240:FF:000007">
    <property type="entry name" value="V-type ATP synthase subunit D"/>
    <property type="match status" value="1"/>
</dbReference>
<dbReference type="Gene3D" id="1.10.287.3240">
    <property type="match status" value="1"/>
</dbReference>
<dbReference type="HAMAP" id="MF_00271">
    <property type="entry name" value="ATP_synth_D_arch"/>
    <property type="match status" value="1"/>
</dbReference>
<dbReference type="InterPro" id="IPR002699">
    <property type="entry name" value="V_ATPase_D"/>
</dbReference>
<dbReference type="NCBIfam" id="NF001543">
    <property type="entry name" value="PRK00373.1-2"/>
    <property type="match status" value="1"/>
</dbReference>
<dbReference type="NCBIfam" id="TIGR00309">
    <property type="entry name" value="V_ATPase_subD"/>
    <property type="match status" value="1"/>
</dbReference>
<dbReference type="PANTHER" id="PTHR11671">
    <property type="entry name" value="V-TYPE ATP SYNTHASE SUBUNIT D"/>
    <property type="match status" value="1"/>
</dbReference>
<dbReference type="Pfam" id="PF01813">
    <property type="entry name" value="ATP-synt_D"/>
    <property type="match status" value="1"/>
</dbReference>
<reference key="1">
    <citation type="journal article" date="2007" name="PLoS ONE">
        <title>Analysis of the neurotoxin complex genes in Clostridium botulinum A1-A4 and B1 strains: BoNT/A3, /Ba4 and /B1 clusters are located within plasmids.</title>
        <authorList>
            <person name="Smith T.J."/>
            <person name="Hill K.K."/>
            <person name="Foley B.T."/>
            <person name="Detter J.C."/>
            <person name="Munk A.C."/>
            <person name="Bruce D.C."/>
            <person name="Doggett N.A."/>
            <person name="Smith L.A."/>
            <person name="Marks J.D."/>
            <person name="Xie G."/>
            <person name="Brettin T.S."/>
        </authorList>
    </citation>
    <scope>NUCLEOTIDE SEQUENCE [LARGE SCALE GENOMIC DNA]</scope>
    <source>
        <strain>Okra / Type B1</strain>
    </source>
</reference>
<organism>
    <name type="scientific">Clostridium botulinum (strain Okra / Type B1)</name>
    <dbReference type="NCBI Taxonomy" id="498213"/>
    <lineage>
        <taxon>Bacteria</taxon>
        <taxon>Bacillati</taxon>
        <taxon>Bacillota</taxon>
        <taxon>Clostridia</taxon>
        <taxon>Eubacteriales</taxon>
        <taxon>Clostridiaceae</taxon>
        <taxon>Clostridium</taxon>
    </lineage>
</organism>
<evidence type="ECO:0000255" key="1">
    <source>
        <dbReference type="HAMAP-Rule" id="MF_00271"/>
    </source>
</evidence>
<gene>
    <name evidence="1" type="primary">atpD</name>
    <name type="ordered locus">CLD_1942</name>
</gene>
<keyword id="KW-0066">ATP synthesis</keyword>
<keyword id="KW-0375">Hydrogen ion transport</keyword>
<keyword id="KW-0406">Ion transport</keyword>
<keyword id="KW-0813">Transport</keyword>